<sequence length="119" mass="13035">MKRIAFVFSTAPHGTAAGREGLDALLATSALTDDLAVFFIADGVFQLLSGQKPDAVLARDYIATFKLLGLYDIEQCWVCAASLRERGLDPQTPFVVEATPLEADALRRELANYDVILRF</sequence>
<protein>
    <recommendedName>
        <fullName evidence="1">Protein TusC</fullName>
    </recommendedName>
    <alternativeName>
        <fullName evidence="1">tRNA 2-thiouridine synthesizing protein C</fullName>
    </alternativeName>
</protein>
<evidence type="ECO:0000255" key="1">
    <source>
        <dbReference type="HAMAP-Rule" id="MF_00389"/>
    </source>
</evidence>
<name>TUSC_ECOSE</name>
<gene>
    <name evidence="1" type="primary">tusC</name>
    <name type="ordered locus">ECSE_3605</name>
</gene>
<proteinExistence type="inferred from homology"/>
<feature type="chain" id="PRO_1000122840" description="Protein TusC">
    <location>
        <begin position="1"/>
        <end position="119"/>
    </location>
</feature>
<reference key="1">
    <citation type="journal article" date="2008" name="DNA Res.">
        <title>Complete genome sequence and comparative analysis of the wild-type commensal Escherichia coli strain SE11 isolated from a healthy adult.</title>
        <authorList>
            <person name="Oshima K."/>
            <person name="Toh H."/>
            <person name="Ogura Y."/>
            <person name="Sasamoto H."/>
            <person name="Morita H."/>
            <person name="Park S.-H."/>
            <person name="Ooka T."/>
            <person name="Iyoda S."/>
            <person name="Taylor T.D."/>
            <person name="Hayashi T."/>
            <person name="Itoh K."/>
            <person name="Hattori M."/>
        </authorList>
    </citation>
    <scope>NUCLEOTIDE SEQUENCE [LARGE SCALE GENOMIC DNA]</scope>
    <source>
        <strain>SE11</strain>
    </source>
</reference>
<comment type="function">
    <text evidence="1">Part of a sulfur-relay system required for 2-thiolation of 5-methylaminomethyl-2-thiouridine (mnm(5)s(2)U) at tRNA wobble positions.</text>
</comment>
<comment type="subunit">
    <text evidence="1">Heterohexamer, formed by a dimer of trimers. The hexameric TusBCD complex contains 2 copies each of TusB, TusC and TusD. The TusBCD complex interacts with TusE.</text>
</comment>
<comment type="subcellular location">
    <subcellularLocation>
        <location evidence="1">Cytoplasm</location>
    </subcellularLocation>
</comment>
<comment type="similarity">
    <text evidence="1">Belongs to the DsrF/TusC family.</text>
</comment>
<dbReference type="EMBL" id="AP009240">
    <property type="protein sequence ID" value="BAG79129.1"/>
    <property type="molecule type" value="Genomic_DNA"/>
</dbReference>
<dbReference type="RefSeq" id="WP_000820720.1">
    <property type="nucleotide sequence ID" value="NC_011415.1"/>
</dbReference>
<dbReference type="SMR" id="B6I244"/>
<dbReference type="GeneID" id="75206287"/>
<dbReference type="KEGG" id="ecy:ECSE_3605"/>
<dbReference type="HOGENOM" id="CLU_155943_1_0_6"/>
<dbReference type="Proteomes" id="UP000008199">
    <property type="component" value="Chromosome"/>
</dbReference>
<dbReference type="GO" id="GO:0005737">
    <property type="term" value="C:cytoplasm"/>
    <property type="evidence" value="ECO:0007669"/>
    <property type="project" value="UniProtKB-SubCell"/>
</dbReference>
<dbReference type="GO" id="GO:0008033">
    <property type="term" value="P:tRNA processing"/>
    <property type="evidence" value="ECO:0007669"/>
    <property type="project" value="UniProtKB-UniRule"/>
</dbReference>
<dbReference type="FunFam" id="3.40.1260.10:FF:000004">
    <property type="entry name" value="Sulfurtransferase TusC"/>
    <property type="match status" value="1"/>
</dbReference>
<dbReference type="Gene3D" id="3.40.1260.10">
    <property type="entry name" value="DsrEFH-like"/>
    <property type="match status" value="1"/>
</dbReference>
<dbReference type="HAMAP" id="MF_00389">
    <property type="entry name" value="Thiourid_synth_C"/>
    <property type="match status" value="1"/>
</dbReference>
<dbReference type="InterPro" id="IPR027396">
    <property type="entry name" value="DsrEFH-like"/>
</dbReference>
<dbReference type="InterPro" id="IPR003787">
    <property type="entry name" value="Sulphur_relay_DsrE/F-like"/>
</dbReference>
<dbReference type="InterPro" id="IPR037450">
    <property type="entry name" value="Sulphur_relay_TusC"/>
</dbReference>
<dbReference type="InterPro" id="IPR017462">
    <property type="entry name" value="Sulphur_relay_TusC/DsrF"/>
</dbReference>
<dbReference type="NCBIfam" id="NF001238">
    <property type="entry name" value="PRK00211.1"/>
    <property type="match status" value="1"/>
</dbReference>
<dbReference type="NCBIfam" id="TIGR03010">
    <property type="entry name" value="sulf_tusC_dsrF"/>
    <property type="match status" value="1"/>
</dbReference>
<dbReference type="PANTHER" id="PTHR38780">
    <property type="entry name" value="PROTEIN TUSC"/>
    <property type="match status" value="1"/>
</dbReference>
<dbReference type="PANTHER" id="PTHR38780:SF1">
    <property type="entry name" value="PROTEIN TUSC"/>
    <property type="match status" value="1"/>
</dbReference>
<dbReference type="Pfam" id="PF02635">
    <property type="entry name" value="DsrE"/>
    <property type="match status" value="1"/>
</dbReference>
<dbReference type="SUPFAM" id="SSF75169">
    <property type="entry name" value="DsrEFH-like"/>
    <property type="match status" value="1"/>
</dbReference>
<keyword id="KW-0963">Cytoplasm</keyword>
<keyword id="KW-0819">tRNA processing</keyword>
<organism>
    <name type="scientific">Escherichia coli (strain SE11)</name>
    <dbReference type="NCBI Taxonomy" id="409438"/>
    <lineage>
        <taxon>Bacteria</taxon>
        <taxon>Pseudomonadati</taxon>
        <taxon>Pseudomonadota</taxon>
        <taxon>Gammaproteobacteria</taxon>
        <taxon>Enterobacterales</taxon>
        <taxon>Enterobacteriaceae</taxon>
        <taxon>Escherichia</taxon>
    </lineage>
</organism>
<accession>B6I244</accession>